<comment type="function">
    <text evidence="1">Binds specifically to GTP-Rho. May function in a Rho pathway to limit stress fiber formation and/or increase the turnover of F-actin structures in the absence of high levels of RhoA activity (By similarity).</text>
</comment>
<comment type="subunit">
    <text evidence="1">Interacts with GTP-bound RhoA and RhoB. Interacts with both GTP- and GDP-bound RhoA. Interacts with KRT18 (By similarity).</text>
</comment>
<comment type="subcellular location">
    <subcellularLocation>
        <location evidence="1">Cytoplasm</location>
        <location evidence="1">Perinuclear region</location>
    </subcellularLocation>
</comment>
<comment type="similarity">
    <text evidence="5">Belongs to the RHPN family.</text>
</comment>
<reference key="1">
    <citation type="journal article" date="2005" name="Science">
        <title>The transcriptional landscape of the mammalian genome.</title>
        <authorList>
            <person name="Carninci P."/>
            <person name="Kasukawa T."/>
            <person name="Katayama S."/>
            <person name="Gough J."/>
            <person name="Frith M.C."/>
            <person name="Maeda N."/>
            <person name="Oyama R."/>
            <person name="Ravasi T."/>
            <person name="Lenhard B."/>
            <person name="Wells C."/>
            <person name="Kodzius R."/>
            <person name="Shimokawa K."/>
            <person name="Bajic V.B."/>
            <person name="Brenner S.E."/>
            <person name="Batalov S."/>
            <person name="Forrest A.R."/>
            <person name="Zavolan M."/>
            <person name="Davis M.J."/>
            <person name="Wilming L.G."/>
            <person name="Aidinis V."/>
            <person name="Allen J.E."/>
            <person name="Ambesi-Impiombato A."/>
            <person name="Apweiler R."/>
            <person name="Aturaliya R.N."/>
            <person name="Bailey T.L."/>
            <person name="Bansal M."/>
            <person name="Baxter L."/>
            <person name="Beisel K.W."/>
            <person name="Bersano T."/>
            <person name="Bono H."/>
            <person name="Chalk A.M."/>
            <person name="Chiu K.P."/>
            <person name="Choudhary V."/>
            <person name="Christoffels A."/>
            <person name="Clutterbuck D.R."/>
            <person name="Crowe M.L."/>
            <person name="Dalla E."/>
            <person name="Dalrymple B.P."/>
            <person name="de Bono B."/>
            <person name="Della Gatta G."/>
            <person name="di Bernardo D."/>
            <person name="Down T."/>
            <person name="Engstrom P."/>
            <person name="Fagiolini M."/>
            <person name="Faulkner G."/>
            <person name="Fletcher C.F."/>
            <person name="Fukushima T."/>
            <person name="Furuno M."/>
            <person name="Futaki S."/>
            <person name="Gariboldi M."/>
            <person name="Georgii-Hemming P."/>
            <person name="Gingeras T.R."/>
            <person name="Gojobori T."/>
            <person name="Green R.E."/>
            <person name="Gustincich S."/>
            <person name="Harbers M."/>
            <person name="Hayashi Y."/>
            <person name="Hensch T.K."/>
            <person name="Hirokawa N."/>
            <person name="Hill D."/>
            <person name="Huminiecki L."/>
            <person name="Iacono M."/>
            <person name="Ikeo K."/>
            <person name="Iwama A."/>
            <person name="Ishikawa T."/>
            <person name="Jakt M."/>
            <person name="Kanapin A."/>
            <person name="Katoh M."/>
            <person name="Kawasawa Y."/>
            <person name="Kelso J."/>
            <person name="Kitamura H."/>
            <person name="Kitano H."/>
            <person name="Kollias G."/>
            <person name="Krishnan S.P."/>
            <person name="Kruger A."/>
            <person name="Kummerfeld S.K."/>
            <person name="Kurochkin I.V."/>
            <person name="Lareau L.F."/>
            <person name="Lazarevic D."/>
            <person name="Lipovich L."/>
            <person name="Liu J."/>
            <person name="Liuni S."/>
            <person name="McWilliam S."/>
            <person name="Madan Babu M."/>
            <person name="Madera M."/>
            <person name="Marchionni L."/>
            <person name="Matsuda H."/>
            <person name="Matsuzawa S."/>
            <person name="Miki H."/>
            <person name="Mignone F."/>
            <person name="Miyake S."/>
            <person name="Morris K."/>
            <person name="Mottagui-Tabar S."/>
            <person name="Mulder N."/>
            <person name="Nakano N."/>
            <person name="Nakauchi H."/>
            <person name="Ng P."/>
            <person name="Nilsson R."/>
            <person name="Nishiguchi S."/>
            <person name="Nishikawa S."/>
            <person name="Nori F."/>
            <person name="Ohara O."/>
            <person name="Okazaki Y."/>
            <person name="Orlando V."/>
            <person name="Pang K.C."/>
            <person name="Pavan W.J."/>
            <person name="Pavesi G."/>
            <person name="Pesole G."/>
            <person name="Petrovsky N."/>
            <person name="Piazza S."/>
            <person name="Reed J."/>
            <person name="Reid J.F."/>
            <person name="Ring B.Z."/>
            <person name="Ringwald M."/>
            <person name="Rost B."/>
            <person name="Ruan Y."/>
            <person name="Salzberg S.L."/>
            <person name="Sandelin A."/>
            <person name="Schneider C."/>
            <person name="Schoenbach C."/>
            <person name="Sekiguchi K."/>
            <person name="Semple C.A."/>
            <person name="Seno S."/>
            <person name="Sessa L."/>
            <person name="Sheng Y."/>
            <person name="Shibata Y."/>
            <person name="Shimada H."/>
            <person name="Shimada K."/>
            <person name="Silva D."/>
            <person name="Sinclair B."/>
            <person name="Sperling S."/>
            <person name="Stupka E."/>
            <person name="Sugiura K."/>
            <person name="Sultana R."/>
            <person name="Takenaka Y."/>
            <person name="Taki K."/>
            <person name="Tammoja K."/>
            <person name="Tan S.L."/>
            <person name="Tang S."/>
            <person name="Taylor M.S."/>
            <person name="Tegner J."/>
            <person name="Teichmann S.A."/>
            <person name="Ueda H.R."/>
            <person name="van Nimwegen E."/>
            <person name="Verardo R."/>
            <person name="Wei C.L."/>
            <person name="Yagi K."/>
            <person name="Yamanishi H."/>
            <person name="Zabarovsky E."/>
            <person name="Zhu S."/>
            <person name="Zimmer A."/>
            <person name="Hide W."/>
            <person name="Bult C."/>
            <person name="Grimmond S.M."/>
            <person name="Teasdale R.D."/>
            <person name="Liu E.T."/>
            <person name="Brusic V."/>
            <person name="Quackenbush J."/>
            <person name="Wahlestedt C."/>
            <person name="Mattick J.S."/>
            <person name="Hume D.A."/>
            <person name="Kai C."/>
            <person name="Sasaki D."/>
            <person name="Tomaru Y."/>
            <person name="Fukuda S."/>
            <person name="Kanamori-Katayama M."/>
            <person name="Suzuki M."/>
            <person name="Aoki J."/>
            <person name="Arakawa T."/>
            <person name="Iida J."/>
            <person name="Imamura K."/>
            <person name="Itoh M."/>
            <person name="Kato T."/>
            <person name="Kawaji H."/>
            <person name="Kawagashira N."/>
            <person name="Kawashima T."/>
            <person name="Kojima M."/>
            <person name="Kondo S."/>
            <person name="Konno H."/>
            <person name="Nakano K."/>
            <person name="Ninomiya N."/>
            <person name="Nishio T."/>
            <person name="Okada M."/>
            <person name="Plessy C."/>
            <person name="Shibata K."/>
            <person name="Shiraki T."/>
            <person name="Suzuki S."/>
            <person name="Tagami M."/>
            <person name="Waki K."/>
            <person name="Watahiki A."/>
            <person name="Okamura-Oho Y."/>
            <person name="Suzuki H."/>
            <person name="Kawai J."/>
            <person name="Hayashizaki Y."/>
        </authorList>
    </citation>
    <scope>NUCLEOTIDE SEQUENCE [LARGE SCALE MRNA]</scope>
    <source>
        <strain>C57BL/6J</strain>
        <tissue>Liver</tissue>
    </source>
</reference>
<reference key="2">
    <citation type="journal article" date="2007" name="Proc. Natl. Acad. Sci. U.S.A.">
        <title>Large-scale phosphorylation analysis of mouse liver.</title>
        <authorList>
            <person name="Villen J."/>
            <person name="Beausoleil S.A."/>
            <person name="Gerber S.A."/>
            <person name="Gygi S.P."/>
        </authorList>
    </citation>
    <scope>PHOSPHORYLATION [LARGE SCALE ANALYSIS] AT THR-655</scope>
    <scope>IDENTIFICATION BY MASS SPECTROMETRY [LARGE SCALE ANALYSIS]</scope>
    <source>
        <tissue>Liver</tissue>
    </source>
</reference>
<reference key="3">
    <citation type="journal article" date="2010" name="Cell">
        <title>A tissue-specific atlas of mouse protein phosphorylation and expression.</title>
        <authorList>
            <person name="Huttlin E.L."/>
            <person name="Jedrychowski M.P."/>
            <person name="Elias J.E."/>
            <person name="Goswami T."/>
            <person name="Rad R."/>
            <person name="Beausoleil S.A."/>
            <person name="Villen J."/>
            <person name="Haas W."/>
            <person name="Sowa M.E."/>
            <person name="Gygi S.P."/>
        </authorList>
    </citation>
    <scope>PHOSPHORYLATION [LARGE SCALE ANALYSIS] AT THR-655</scope>
    <scope>IDENTIFICATION BY MASS SPECTROMETRY [LARGE SCALE ANALYSIS]</scope>
    <source>
        <tissue>Heart</tissue>
        <tissue>Kidney</tissue>
        <tissue>Liver</tissue>
        <tissue>Lung</tissue>
        <tissue>Pancreas</tissue>
        <tissue>Testis</tissue>
    </source>
</reference>
<reference key="4">
    <citation type="submission" date="2004-08" db="PDB data bank">
        <title>Solution structure of the PDZ domain of mouse rhophilin-2.</title>
        <authorList>
            <consortium name="RIKEN structural genomics initiative (RSGI)"/>
        </authorList>
    </citation>
    <scope>STRUCTURE BY NMR OF 506-603</scope>
</reference>
<keyword id="KW-0002">3D-structure</keyword>
<keyword id="KW-0175">Coiled coil</keyword>
<keyword id="KW-0963">Cytoplasm</keyword>
<keyword id="KW-0597">Phosphoprotein</keyword>
<keyword id="KW-1185">Reference proteome</keyword>
<dbReference type="EMBL" id="AK004849">
    <property type="protein sequence ID" value="BAB23615.1"/>
    <property type="molecule type" value="mRNA"/>
</dbReference>
<dbReference type="EMBL" id="AK050214">
    <property type="protein sequence ID" value="BAC34127.1"/>
    <property type="molecule type" value="mRNA"/>
</dbReference>
<dbReference type="CCDS" id="CCDS21148.1"/>
<dbReference type="RefSeq" id="NP_082173.3">
    <property type="nucleotide sequence ID" value="NM_027897.4"/>
</dbReference>
<dbReference type="PDB" id="1VAE">
    <property type="method" value="NMR"/>
    <property type="chains" value="A=506-603"/>
</dbReference>
<dbReference type="PDBsum" id="1VAE"/>
<dbReference type="SMR" id="Q8BWR8"/>
<dbReference type="BioGRID" id="206579">
    <property type="interactions" value="3"/>
</dbReference>
<dbReference type="FunCoup" id="Q8BWR8">
    <property type="interactions" value="165"/>
</dbReference>
<dbReference type="STRING" id="10090.ENSMUSP00000032705"/>
<dbReference type="iPTMnet" id="Q8BWR8"/>
<dbReference type="PhosphoSitePlus" id="Q8BWR8"/>
<dbReference type="PaxDb" id="10090-ENSMUSP00000032705"/>
<dbReference type="ProteomicsDB" id="253125"/>
<dbReference type="Antibodypedia" id="28974">
    <property type="antibodies" value="135 antibodies from 30 providers"/>
</dbReference>
<dbReference type="DNASU" id="52428"/>
<dbReference type="Ensembl" id="ENSMUST00000032705.13">
    <property type="protein sequence ID" value="ENSMUSP00000032705.7"/>
    <property type="gene ID" value="ENSMUSG00000030494.15"/>
</dbReference>
<dbReference type="GeneID" id="52428"/>
<dbReference type="KEGG" id="mmu:52428"/>
<dbReference type="UCSC" id="uc009gjs.2">
    <property type="organism name" value="mouse"/>
</dbReference>
<dbReference type="AGR" id="MGI:1289234"/>
<dbReference type="CTD" id="85415"/>
<dbReference type="MGI" id="MGI:1289234">
    <property type="gene designation" value="Rhpn2"/>
</dbReference>
<dbReference type="VEuPathDB" id="HostDB:ENSMUSG00000030494"/>
<dbReference type="eggNOG" id="KOG2220">
    <property type="taxonomic scope" value="Eukaryota"/>
</dbReference>
<dbReference type="GeneTree" id="ENSGT00940000153837"/>
<dbReference type="HOGENOM" id="CLU_006514_1_1_1"/>
<dbReference type="InParanoid" id="Q8BWR8"/>
<dbReference type="OMA" id="QAQENVF"/>
<dbReference type="OrthoDB" id="64867at2759"/>
<dbReference type="PhylomeDB" id="Q8BWR8"/>
<dbReference type="TreeFam" id="TF323502"/>
<dbReference type="Reactome" id="R-MMU-5666185">
    <property type="pathway name" value="RHO GTPases Activate Rhotekin and Rhophilins"/>
</dbReference>
<dbReference type="Reactome" id="R-MMU-8980692">
    <property type="pathway name" value="RHOA GTPase cycle"/>
</dbReference>
<dbReference type="Reactome" id="R-MMU-9013026">
    <property type="pathway name" value="RHOB GTPase cycle"/>
</dbReference>
<dbReference type="BioGRID-ORCS" id="52428">
    <property type="hits" value="1 hit in 77 CRISPR screens"/>
</dbReference>
<dbReference type="ChiTaRS" id="Rhpn2">
    <property type="organism name" value="mouse"/>
</dbReference>
<dbReference type="EvolutionaryTrace" id="Q8BWR8"/>
<dbReference type="PRO" id="PR:Q8BWR8"/>
<dbReference type="Proteomes" id="UP000000589">
    <property type="component" value="Chromosome 7"/>
</dbReference>
<dbReference type="RNAct" id="Q8BWR8">
    <property type="molecule type" value="protein"/>
</dbReference>
<dbReference type="Bgee" id="ENSMUSG00000030494">
    <property type="expression patterns" value="Expressed in secondary oocyte and 235 other cell types or tissues"/>
</dbReference>
<dbReference type="GO" id="GO:0048471">
    <property type="term" value="C:perinuclear region of cytoplasm"/>
    <property type="evidence" value="ECO:0007669"/>
    <property type="project" value="UniProtKB-SubCell"/>
</dbReference>
<dbReference type="GO" id="GO:0005886">
    <property type="term" value="C:plasma membrane"/>
    <property type="evidence" value="ECO:0007669"/>
    <property type="project" value="Ensembl"/>
</dbReference>
<dbReference type="GO" id="GO:0003094">
    <property type="term" value="P:glomerular filtration"/>
    <property type="evidence" value="ECO:0000316"/>
    <property type="project" value="MGI"/>
</dbReference>
<dbReference type="GO" id="GO:0051497">
    <property type="term" value="P:negative regulation of stress fiber assembly"/>
    <property type="evidence" value="ECO:0007669"/>
    <property type="project" value="Ensembl"/>
</dbReference>
<dbReference type="GO" id="GO:0007165">
    <property type="term" value="P:signal transduction"/>
    <property type="evidence" value="ECO:0007669"/>
    <property type="project" value="InterPro"/>
</dbReference>
<dbReference type="CDD" id="cd09249">
    <property type="entry name" value="BRO1_Rhophilin_2"/>
    <property type="match status" value="1"/>
</dbReference>
<dbReference type="CDD" id="cd11634">
    <property type="entry name" value="HR1_Rhophilin-2"/>
    <property type="match status" value="1"/>
</dbReference>
<dbReference type="CDD" id="cd06712">
    <property type="entry name" value="PDZ_rhophilin-like"/>
    <property type="match status" value="1"/>
</dbReference>
<dbReference type="FunFam" id="1.10.287.160:FF:000007">
    <property type="entry name" value="Rhophilin-2"/>
    <property type="match status" value="1"/>
</dbReference>
<dbReference type="FunFam" id="1.25.40.280:FF:000003">
    <property type="entry name" value="RHPN1 isoform 1"/>
    <property type="match status" value="1"/>
</dbReference>
<dbReference type="FunFam" id="2.30.42.10:FF:000160">
    <property type="entry name" value="RHPN1 isoform 1"/>
    <property type="match status" value="1"/>
</dbReference>
<dbReference type="Gene3D" id="2.30.42.10">
    <property type="match status" value="1"/>
</dbReference>
<dbReference type="Gene3D" id="1.25.40.280">
    <property type="entry name" value="alix/aip1 like domains"/>
    <property type="match status" value="1"/>
</dbReference>
<dbReference type="Gene3D" id="1.10.287.160">
    <property type="entry name" value="HR1 repeat"/>
    <property type="match status" value="1"/>
</dbReference>
<dbReference type="InterPro" id="IPR004328">
    <property type="entry name" value="BRO1_dom"/>
</dbReference>
<dbReference type="InterPro" id="IPR038499">
    <property type="entry name" value="BRO1_sf"/>
</dbReference>
<dbReference type="InterPro" id="IPR011072">
    <property type="entry name" value="HR1_rho-bd"/>
</dbReference>
<dbReference type="InterPro" id="IPR036274">
    <property type="entry name" value="HR1_rpt_sf"/>
</dbReference>
<dbReference type="InterPro" id="IPR001478">
    <property type="entry name" value="PDZ"/>
</dbReference>
<dbReference type="InterPro" id="IPR036034">
    <property type="entry name" value="PDZ_sf"/>
</dbReference>
<dbReference type="InterPro" id="IPR049603">
    <property type="entry name" value="Rhophilin-2_HR1"/>
</dbReference>
<dbReference type="InterPro" id="IPR047138">
    <property type="entry name" value="RHPN1_2"/>
</dbReference>
<dbReference type="InterPro" id="IPR047902">
    <property type="entry name" value="RHPN2_BRO1"/>
</dbReference>
<dbReference type="PANTHER" id="PTHR23031">
    <property type="entry name" value="RHOPHILIN"/>
    <property type="match status" value="1"/>
</dbReference>
<dbReference type="PANTHER" id="PTHR23031:SF5">
    <property type="entry name" value="RHOPHILIN-2-RELATED"/>
    <property type="match status" value="1"/>
</dbReference>
<dbReference type="Pfam" id="PF03097">
    <property type="entry name" value="BRO1"/>
    <property type="match status" value="1"/>
</dbReference>
<dbReference type="Pfam" id="PF02185">
    <property type="entry name" value="HR1"/>
    <property type="match status" value="1"/>
</dbReference>
<dbReference type="Pfam" id="PF00595">
    <property type="entry name" value="PDZ"/>
    <property type="match status" value="1"/>
</dbReference>
<dbReference type="SMART" id="SM01041">
    <property type="entry name" value="BRO1"/>
    <property type="match status" value="1"/>
</dbReference>
<dbReference type="SMART" id="SM00742">
    <property type="entry name" value="Hr1"/>
    <property type="match status" value="1"/>
</dbReference>
<dbReference type="SMART" id="SM00228">
    <property type="entry name" value="PDZ"/>
    <property type="match status" value="1"/>
</dbReference>
<dbReference type="SUPFAM" id="SSF46585">
    <property type="entry name" value="HR1 repeat"/>
    <property type="match status" value="1"/>
</dbReference>
<dbReference type="SUPFAM" id="SSF50156">
    <property type="entry name" value="PDZ domain-like"/>
    <property type="match status" value="1"/>
</dbReference>
<dbReference type="PROSITE" id="PS51180">
    <property type="entry name" value="BRO1"/>
    <property type="match status" value="1"/>
</dbReference>
<dbReference type="PROSITE" id="PS50106">
    <property type="entry name" value="PDZ"/>
    <property type="match status" value="1"/>
</dbReference>
<dbReference type="PROSITE" id="PS51860">
    <property type="entry name" value="REM_1"/>
    <property type="match status" value="1"/>
</dbReference>
<proteinExistence type="evidence at protein level"/>
<name>RHPN2_MOUSE</name>
<protein>
    <recommendedName>
        <fullName>Rhophilin-2</fullName>
    </recommendedName>
    <alternativeName>
        <fullName>GTP-Rho-binding protein 2</fullName>
    </alternativeName>
</protein>
<accession>Q8BWR8</accession>
<accession>Q9DBN2</accession>
<organism>
    <name type="scientific">Mus musculus</name>
    <name type="common">Mouse</name>
    <dbReference type="NCBI Taxonomy" id="10090"/>
    <lineage>
        <taxon>Eukaryota</taxon>
        <taxon>Metazoa</taxon>
        <taxon>Chordata</taxon>
        <taxon>Craniata</taxon>
        <taxon>Vertebrata</taxon>
        <taxon>Euteleostomi</taxon>
        <taxon>Mammalia</taxon>
        <taxon>Eutheria</taxon>
        <taxon>Euarchontoglires</taxon>
        <taxon>Glires</taxon>
        <taxon>Rodentia</taxon>
        <taxon>Myomorpha</taxon>
        <taxon>Muroidea</taxon>
        <taxon>Muridae</taxon>
        <taxon>Murinae</taxon>
        <taxon>Mus</taxon>
        <taxon>Mus</taxon>
    </lineage>
</organism>
<gene>
    <name type="primary">Rhpn2</name>
</gene>
<sequence>MTDTLLPAAPQPLEKEGDDYFRKGCNPLAQTGRSKLQNQRAALNQQILKAVRMRTGAENLLKVATNQKVREQVRLELSFVNSDLQMLKEELEGLNISVGVYQGTEEAFTIPLIPLGLKETKEVDFSIVFKDFILEHYSEDSYLYEDDIADLMDLRQACRTPSRDEAGVELLMSYFIQLGFVESRFFPPTRHMGLLFTWYDSFTGVPVSQQTLLLEKASVLFNIGALYTQIGTRCNRQTQAGLESAVDAFQRAAGVLNYLKETFTHTPSYDMSPAMLSVLVKMMLAQAQESVFEKVCLPGIQNEFFVLVKVAQEAAKVAEAYRQLHAAMSQEPVKENIPYSWASVAYVKAYHYGALAHYFAATLLIDHQLKPGADEDHQEKCLSQLYDRMPEGMTPLATLKNAGQRVLLGKGHLHRAIGFHEESLREANLCKKLRDIQVLRDVLSAAHQRTQLKHTQHREDDDLLNLIDAPDVLPKTEREVKITFPDFSKVTVTDFFQKLGPLSVFSASKRWSPPRGIHFTVEEGDLGFTLRGNTPVQVHFLDPHCSASLAGAKEGDYIVSIQGVDCKWLTVSEVMKLLKSFGGEEVEMKVVSLLDSTSSMHNKCATYSVGMQKTYSMICLSMDDDDKADKTKKISKKLSFLSWGTSKNRQKSASTLCLPEVGLARSQNKKKLPTPFSLLNSDSSLY</sequence>
<feature type="chain" id="PRO_0000218899" description="Rhophilin-2">
    <location>
        <begin position="1"/>
        <end position="686"/>
    </location>
</feature>
<feature type="domain" description="REM-1" evidence="4">
    <location>
        <begin position="26"/>
        <end position="100"/>
    </location>
</feature>
<feature type="domain" description="BRO1" evidence="3">
    <location>
        <begin position="111"/>
        <end position="502"/>
    </location>
</feature>
<feature type="domain" description="PDZ" evidence="2">
    <location>
        <begin position="515"/>
        <end position="593"/>
    </location>
</feature>
<feature type="region of interest" description="Interaction with Rho" evidence="1">
    <location>
        <begin position="46"/>
        <end position="66"/>
    </location>
</feature>
<feature type="modified residue" description="Phosphothreonine" evidence="6 7">
    <location>
        <position position="655"/>
    </location>
</feature>
<feature type="sequence conflict" description="In Ref. 1; BAC34127." evidence="5" ref="1">
    <original>T</original>
    <variation>A</variation>
    <location>
        <position position="55"/>
    </location>
</feature>
<feature type="sequence conflict" description="In Ref. 1; BAC34127." evidence="5" ref="1">
    <original>H</original>
    <variation>D</variation>
    <location>
        <position position="518"/>
    </location>
</feature>
<feature type="strand" evidence="8">
    <location>
        <begin position="530"/>
        <end position="535"/>
    </location>
</feature>
<feature type="helix" evidence="8">
    <location>
        <begin position="547"/>
        <end position="551"/>
    </location>
</feature>
<feature type="strand" evidence="8">
    <location>
        <begin position="557"/>
        <end position="561"/>
    </location>
</feature>
<feature type="helix" evidence="8">
    <location>
        <begin position="571"/>
        <end position="580"/>
    </location>
</feature>
<feature type="turn" evidence="8">
    <location>
        <begin position="581"/>
        <end position="583"/>
    </location>
</feature>
<feature type="strand" evidence="8">
    <location>
        <begin position="584"/>
        <end position="586"/>
    </location>
</feature>
<feature type="strand" evidence="8">
    <location>
        <begin position="588"/>
        <end position="591"/>
    </location>
</feature>
<evidence type="ECO:0000250" key="1"/>
<evidence type="ECO:0000255" key="2">
    <source>
        <dbReference type="PROSITE-ProRule" id="PRU00143"/>
    </source>
</evidence>
<evidence type="ECO:0000255" key="3">
    <source>
        <dbReference type="PROSITE-ProRule" id="PRU00526"/>
    </source>
</evidence>
<evidence type="ECO:0000255" key="4">
    <source>
        <dbReference type="PROSITE-ProRule" id="PRU01207"/>
    </source>
</evidence>
<evidence type="ECO:0000305" key="5"/>
<evidence type="ECO:0007744" key="6">
    <source>
    </source>
</evidence>
<evidence type="ECO:0007744" key="7">
    <source>
    </source>
</evidence>
<evidence type="ECO:0007829" key="8">
    <source>
        <dbReference type="PDB" id="1VAE"/>
    </source>
</evidence>